<feature type="transit peptide" description="Mitochondrion" evidence="4">
    <location>
        <begin position="1"/>
        <end status="unknown"/>
    </location>
</feature>
<feature type="chain" id="PRO_0000032884" description="Probable superoxide dismutase [Mn], mitochondrial">
    <location>
        <begin status="unknown"/>
        <end position="211"/>
    </location>
</feature>
<feature type="binding site" evidence="1">
    <location>
        <position position="36"/>
    </location>
    <ligand>
        <name>Mn(2+)</name>
        <dbReference type="ChEBI" id="CHEBI:29035"/>
    </ligand>
</feature>
<feature type="binding site" evidence="1">
    <location>
        <position position="84"/>
    </location>
    <ligand>
        <name>Mn(2+)</name>
        <dbReference type="ChEBI" id="CHEBI:29035"/>
    </ligand>
</feature>
<feature type="binding site" evidence="1">
    <location>
        <position position="173"/>
    </location>
    <ligand>
        <name>Mn(2+)</name>
        <dbReference type="ChEBI" id="CHEBI:29035"/>
    </ligand>
</feature>
<feature type="binding site" evidence="1">
    <location>
        <position position="177"/>
    </location>
    <ligand>
        <name>Mn(2+)</name>
        <dbReference type="ChEBI" id="CHEBI:29035"/>
    </ligand>
</feature>
<dbReference type="EC" id="1.15.1.1" evidence="2"/>
<dbReference type="EMBL" id="CR382137">
    <property type="protein sequence ID" value="CAG87585.1"/>
    <property type="molecule type" value="Genomic_DNA"/>
</dbReference>
<dbReference type="RefSeq" id="XP_459379.1">
    <property type="nucleotide sequence ID" value="XM_459379.1"/>
</dbReference>
<dbReference type="SMR" id="Q6BQZ1"/>
<dbReference type="FunCoup" id="Q6BQZ1">
    <property type="interactions" value="668"/>
</dbReference>
<dbReference type="STRING" id="284592.Q6BQZ1"/>
<dbReference type="GeneID" id="2902917"/>
<dbReference type="KEGG" id="dha:DEHA2E01232g"/>
<dbReference type="VEuPathDB" id="FungiDB:DEHA2E01232g"/>
<dbReference type="eggNOG" id="KOG0876">
    <property type="taxonomic scope" value="Eukaryota"/>
</dbReference>
<dbReference type="HOGENOM" id="CLU_031625_2_1_1"/>
<dbReference type="InParanoid" id="Q6BQZ1"/>
<dbReference type="OMA" id="LNNWWNV"/>
<dbReference type="OrthoDB" id="239262at2759"/>
<dbReference type="Proteomes" id="UP000000599">
    <property type="component" value="Chromosome E"/>
</dbReference>
<dbReference type="GO" id="GO:0005759">
    <property type="term" value="C:mitochondrial matrix"/>
    <property type="evidence" value="ECO:0007669"/>
    <property type="project" value="UniProtKB-SubCell"/>
</dbReference>
<dbReference type="GO" id="GO:0030145">
    <property type="term" value="F:manganese ion binding"/>
    <property type="evidence" value="ECO:0007669"/>
    <property type="project" value="TreeGrafter"/>
</dbReference>
<dbReference type="GO" id="GO:0004784">
    <property type="term" value="F:superoxide dismutase activity"/>
    <property type="evidence" value="ECO:0007669"/>
    <property type="project" value="UniProtKB-EC"/>
</dbReference>
<dbReference type="FunFam" id="1.10.287.990:FF:000001">
    <property type="entry name" value="Superoxide dismutase"/>
    <property type="match status" value="1"/>
</dbReference>
<dbReference type="FunFam" id="3.55.40.20:FF:000002">
    <property type="entry name" value="Superoxide dismutase"/>
    <property type="match status" value="1"/>
</dbReference>
<dbReference type="Gene3D" id="1.10.287.990">
    <property type="entry name" value="Fe,Mn superoxide dismutase (SOD) domain"/>
    <property type="match status" value="1"/>
</dbReference>
<dbReference type="Gene3D" id="3.55.40.20">
    <property type="entry name" value="Iron/manganese superoxide dismutase, C-terminal domain"/>
    <property type="match status" value="1"/>
</dbReference>
<dbReference type="InterPro" id="IPR050265">
    <property type="entry name" value="Fe/Mn_Superoxide_Dismutase"/>
</dbReference>
<dbReference type="InterPro" id="IPR001189">
    <property type="entry name" value="Mn/Fe_SOD"/>
</dbReference>
<dbReference type="InterPro" id="IPR019833">
    <property type="entry name" value="Mn/Fe_SOD_BS"/>
</dbReference>
<dbReference type="InterPro" id="IPR019832">
    <property type="entry name" value="Mn/Fe_SOD_C"/>
</dbReference>
<dbReference type="InterPro" id="IPR019831">
    <property type="entry name" value="Mn/Fe_SOD_N"/>
</dbReference>
<dbReference type="InterPro" id="IPR036324">
    <property type="entry name" value="Mn/Fe_SOD_N_sf"/>
</dbReference>
<dbReference type="InterPro" id="IPR036314">
    <property type="entry name" value="SOD_C_sf"/>
</dbReference>
<dbReference type="PANTHER" id="PTHR11404">
    <property type="entry name" value="SUPEROXIDE DISMUTASE 2"/>
    <property type="match status" value="1"/>
</dbReference>
<dbReference type="PANTHER" id="PTHR11404:SF6">
    <property type="entry name" value="SUPEROXIDE DISMUTASE [MN], MITOCHONDRIAL"/>
    <property type="match status" value="1"/>
</dbReference>
<dbReference type="Pfam" id="PF02777">
    <property type="entry name" value="Sod_Fe_C"/>
    <property type="match status" value="1"/>
</dbReference>
<dbReference type="Pfam" id="PF00081">
    <property type="entry name" value="Sod_Fe_N"/>
    <property type="match status" value="1"/>
</dbReference>
<dbReference type="PIRSF" id="PIRSF000349">
    <property type="entry name" value="SODismutase"/>
    <property type="match status" value="1"/>
</dbReference>
<dbReference type="PRINTS" id="PR01703">
    <property type="entry name" value="MNSODISMTASE"/>
</dbReference>
<dbReference type="SUPFAM" id="SSF54719">
    <property type="entry name" value="Fe,Mn superoxide dismutase (SOD), C-terminal domain"/>
    <property type="match status" value="1"/>
</dbReference>
<dbReference type="SUPFAM" id="SSF46609">
    <property type="entry name" value="Fe,Mn superoxide dismutase (SOD), N-terminal domain"/>
    <property type="match status" value="1"/>
</dbReference>
<dbReference type="PROSITE" id="PS00088">
    <property type="entry name" value="SOD_MN"/>
    <property type="match status" value="1"/>
</dbReference>
<name>SODM_DEBHA</name>
<proteinExistence type="inferred from homology"/>
<reference key="1">
    <citation type="journal article" date="2004" name="Nature">
        <title>Genome evolution in yeasts.</title>
        <authorList>
            <person name="Dujon B."/>
            <person name="Sherman D."/>
            <person name="Fischer G."/>
            <person name="Durrens P."/>
            <person name="Casaregola S."/>
            <person name="Lafontaine I."/>
            <person name="de Montigny J."/>
            <person name="Marck C."/>
            <person name="Neuveglise C."/>
            <person name="Talla E."/>
            <person name="Goffard N."/>
            <person name="Frangeul L."/>
            <person name="Aigle M."/>
            <person name="Anthouard V."/>
            <person name="Babour A."/>
            <person name="Barbe V."/>
            <person name="Barnay S."/>
            <person name="Blanchin S."/>
            <person name="Beckerich J.-M."/>
            <person name="Beyne E."/>
            <person name="Bleykasten C."/>
            <person name="Boisrame A."/>
            <person name="Boyer J."/>
            <person name="Cattolico L."/>
            <person name="Confanioleri F."/>
            <person name="de Daruvar A."/>
            <person name="Despons L."/>
            <person name="Fabre E."/>
            <person name="Fairhead C."/>
            <person name="Ferry-Dumazet H."/>
            <person name="Groppi A."/>
            <person name="Hantraye F."/>
            <person name="Hennequin C."/>
            <person name="Jauniaux N."/>
            <person name="Joyet P."/>
            <person name="Kachouri R."/>
            <person name="Kerrest A."/>
            <person name="Koszul R."/>
            <person name="Lemaire M."/>
            <person name="Lesur I."/>
            <person name="Ma L."/>
            <person name="Muller H."/>
            <person name="Nicaud J.-M."/>
            <person name="Nikolski M."/>
            <person name="Oztas S."/>
            <person name="Ozier-Kalogeropoulos O."/>
            <person name="Pellenz S."/>
            <person name="Potier S."/>
            <person name="Richard G.-F."/>
            <person name="Straub M.-L."/>
            <person name="Suleau A."/>
            <person name="Swennen D."/>
            <person name="Tekaia F."/>
            <person name="Wesolowski-Louvel M."/>
            <person name="Westhof E."/>
            <person name="Wirth B."/>
            <person name="Zeniou-Meyer M."/>
            <person name="Zivanovic Y."/>
            <person name="Bolotin-Fukuhara M."/>
            <person name="Thierry A."/>
            <person name="Bouchier C."/>
            <person name="Caudron B."/>
            <person name="Scarpelli C."/>
            <person name="Gaillardin C."/>
            <person name="Weissenbach J."/>
            <person name="Wincker P."/>
            <person name="Souciet J.-L."/>
        </authorList>
    </citation>
    <scope>NUCLEOTIDE SEQUENCE [LARGE SCALE GENOMIC DNA]</scope>
    <source>
        <strain>ATCC 36239 / CBS 767 / BCRC 21394 / JCM 1990 / NBRC 0083 / IGC 2968</strain>
    </source>
</reference>
<protein>
    <recommendedName>
        <fullName>Probable superoxide dismutase [Mn], mitochondrial</fullName>
        <ecNumber evidence="2">1.15.1.1</ecNumber>
    </recommendedName>
</protein>
<organism>
    <name type="scientific">Debaryomyces hansenii (strain ATCC 36239 / CBS 767 / BCRC 21394 / JCM 1990 / NBRC 0083 / IGC 2968)</name>
    <name type="common">Yeast</name>
    <name type="synonym">Torulaspora hansenii</name>
    <dbReference type="NCBI Taxonomy" id="284592"/>
    <lineage>
        <taxon>Eukaryota</taxon>
        <taxon>Fungi</taxon>
        <taxon>Dikarya</taxon>
        <taxon>Ascomycota</taxon>
        <taxon>Saccharomycotina</taxon>
        <taxon>Pichiomycetes</taxon>
        <taxon>Debaryomycetaceae</taxon>
        <taxon>Debaryomyces</taxon>
    </lineage>
</organism>
<comment type="function">
    <text evidence="1">Destroys superoxide anion radicals which are normally produced within the cells and which are toxic to biological systems.</text>
</comment>
<comment type="catalytic activity">
    <reaction evidence="2">
        <text>2 superoxide + 2 H(+) = H2O2 + O2</text>
        <dbReference type="Rhea" id="RHEA:20696"/>
        <dbReference type="ChEBI" id="CHEBI:15378"/>
        <dbReference type="ChEBI" id="CHEBI:15379"/>
        <dbReference type="ChEBI" id="CHEBI:16240"/>
        <dbReference type="ChEBI" id="CHEBI:18421"/>
        <dbReference type="EC" id="1.15.1.1"/>
    </reaction>
</comment>
<comment type="cofactor">
    <cofactor evidence="3">
        <name>Mn(2+)</name>
        <dbReference type="ChEBI" id="CHEBI:29035"/>
    </cofactor>
    <text evidence="3">Binds 1 Mn(2+) ion per subunit.</text>
</comment>
<comment type="subunit">
    <text evidence="1">Homotetramer.</text>
</comment>
<comment type="subcellular location">
    <subcellularLocation>
        <location evidence="3">Mitochondrion matrix</location>
    </subcellularLocation>
</comment>
<comment type="similarity">
    <text evidence="5">Belongs to the iron/manganese superoxide dismutase family.</text>
</comment>
<sequence length="211" mass="23719">MSNSPAFGKNKIELPQLDWAYDSLEPYISGKINEIHHKKHHQTYVNGYNSAIEQLIEAESQGDVKKAIVIQQNIKFHGGGHTNHVLFWKSLAPNSQNGGKHPGSDTNLGKKIIEQYGSIDNLISITNAKLASIQGSGWAFIVKNKQNGGNLDVVTTYNQDTVTDPLVPLIAIDAWEHAYYLQYQNVKADYFKAIWNVINWEEASKRFDSHL</sequence>
<gene>
    <name type="ordered locus">DEHA2E01232g</name>
</gene>
<keyword id="KW-0049">Antioxidant</keyword>
<keyword id="KW-0464">Manganese</keyword>
<keyword id="KW-0479">Metal-binding</keyword>
<keyword id="KW-0496">Mitochondrion</keyword>
<keyword id="KW-0560">Oxidoreductase</keyword>
<keyword id="KW-1185">Reference proteome</keyword>
<keyword id="KW-0809">Transit peptide</keyword>
<accession>Q6BQZ1</accession>
<evidence type="ECO:0000250" key="1">
    <source>
        <dbReference type="UniProtKB" id="P04179"/>
    </source>
</evidence>
<evidence type="ECO:0000250" key="2">
    <source>
        <dbReference type="UniProtKB" id="P0A0J3"/>
    </source>
</evidence>
<evidence type="ECO:0000250" key="3">
    <source>
        <dbReference type="UniProtKB" id="Q9UQX0"/>
    </source>
</evidence>
<evidence type="ECO:0000255" key="4"/>
<evidence type="ECO:0000305" key="5"/>